<accession>D3Z8E6</accession>
<protein>
    <recommendedName>
        <fullName>Calmodulin-regulated spectrin-associated protein 1</fullName>
    </recommendedName>
</protein>
<organism>
    <name type="scientific">Rattus norvegicus</name>
    <name type="common">Rat</name>
    <dbReference type="NCBI Taxonomy" id="10116"/>
    <lineage>
        <taxon>Eukaryota</taxon>
        <taxon>Metazoa</taxon>
        <taxon>Chordata</taxon>
        <taxon>Craniata</taxon>
        <taxon>Vertebrata</taxon>
        <taxon>Euteleostomi</taxon>
        <taxon>Mammalia</taxon>
        <taxon>Eutheria</taxon>
        <taxon>Euarchontoglires</taxon>
        <taxon>Glires</taxon>
        <taxon>Rodentia</taxon>
        <taxon>Myomorpha</taxon>
        <taxon>Muroidea</taxon>
        <taxon>Muridae</taxon>
        <taxon>Murinae</taxon>
        <taxon>Rattus</taxon>
    </lineage>
</organism>
<dbReference type="EMBL" id="AABR06021903">
    <property type="status" value="NOT_ANNOTATED_CDS"/>
    <property type="molecule type" value="Genomic_DNA"/>
</dbReference>
<dbReference type="RefSeq" id="NP_001162021.1">
    <property type="nucleotide sequence ID" value="NM_001168549.2"/>
</dbReference>
<dbReference type="SMR" id="D3Z8E6"/>
<dbReference type="FunCoup" id="D3Z8E6">
    <property type="interactions" value="3895"/>
</dbReference>
<dbReference type="IntAct" id="D3Z8E6">
    <property type="interactions" value="4"/>
</dbReference>
<dbReference type="STRING" id="10116.ENSRNOP00000024163"/>
<dbReference type="GlyGen" id="D3Z8E6">
    <property type="glycosylation" value="1 site"/>
</dbReference>
<dbReference type="iPTMnet" id="D3Z8E6"/>
<dbReference type="PhosphoSitePlus" id="D3Z8E6"/>
<dbReference type="PaxDb" id="10116-ENSRNOP00000024163"/>
<dbReference type="PeptideAtlas" id="D3Z8E6"/>
<dbReference type="Ensembl" id="ENSRNOT00000024163.8">
    <property type="protein sequence ID" value="ENSRNOP00000024163.6"/>
    <property type="gene ID" value="ENSRNOG00000017883.8"/>
</dbReference>
<dbReference type="GeneID" id="296580"/>
<dbReference type="KEGG" id="rno:296580"/>
<dbReference type="AGR" id="RGD:1565022"/>
<dbReference type="CTD" id="157922"/>
<dbReference type="RGD" id="1565022">
    <property type="gene designation" value="Camsap1"/>
</dbReference>
<dbReference type="eggNOG" id="KOG3654">
    <property type="taxonomic scope" value="Eukaryota"/>
</dbReference>
<dbReference type="GeneTree" id="ENSGT00950000182975"/>
<dbReference type="HOGENOM" id="CLU_004833_1_0_1"/>
<dbReference type="InParanoid" id="D3Z8E6"/>
<dbReference type="OMA" id="SNQRTCV"/>
<dbReference type="OrthoDB" id="46458at9989"/>
<dbReference type="TreeFam" id="TF315529"/>
<dbReference type="PRO" id="PR:D3Z8E6"/>
<dbReference type="Proteomes" id="UP000002494">
    <property type="component" value="Chromosome 3"/>
</dbReference>
<dbReference type="Bgee" id="ENSRNOG00000017883">
    <property type="expression patterns" value="Expressed in testis and 18 other cell types or tissues"/>
</dbReference>
<dbReference type="ExpressionAtlas" id="D3Z8E6">
    <property type="expression patterns" value="baseline and differential"/>
</dbReference>
<dbReference type="GO" id="GO:0005737">
    <property type="term" value="C:cytoplasm"/>
    <property type="evidence" value="ECO:0007669"/>
    <property type="project" value="UniProtKB-KW"/>
</dbReference>
<dbReference type="GO" id="GO:0005874">
    <property type="term" value="C:microtubule"/>
    <property type="evidence" value="ECO:0000250"/>
    <property type="project" value="UniProtKB"/>
</dbReference>
<dbReference type="GO" id="GO:0036449">
    <property type="term" value="C:microtubule minus-end"/>
    <property type="evidence" value="ECO:0000266"/>
    <property type="project" value="RGD"/>
</dbReference>
<dbReference type="GO" id="GO:0005516">
    <property type="term" value="F:calmodulin binding"/>
    <property type="evidence" value="ECO:0000314"/>
    <property type="project" value="UniProtKB"/>
</dbReference>
<dbReference type="GO" id="GO:0008017">
    <property type="term" value="F:microtubule binding"/>
    <property type="evidence" value="ECO:0000250"/>
    <property type="project" value="UniProtKB"/>
</dbReference>
<dbReference type="GO" id="GO:0051011">
    <property type="term" value="F:microtubule minus-end binding"/>
    <property type="evidence" value="ECO:0000250"/>
    <property type="project" value="UniProtKB"/>
</dbReference>
<dbReference type="GO" id="GO:0030507">
    <property type="term" value="F:spectrin binding"/>
    <property type="evidence" value="ECO:0000314"/>
    <property type="project" value="UniProtKB"/>
</dbReference>
<dbReference type="GO" id="GO:0031122">
    <property type="term" value="P:cytoplasmic microtubule organization"/>
    <property type="evidence" value="ECO:0000318"/>
    <property type="project" value="GO_Central"/>
</dbReference>
<dbReference type="GO" id="GO:0007010">
    <property type="term" value="P:cytoskeleton organization"/>
    <property type="evidence" value="ECO:0000266"/>
    <property type="project" value="RGD"/>
</dbReference>
<dbReference type="GO" id="GO:0000226">
    <property type="term" value="P:microtubule cytoskeleton organization"/>
    <property type="evidence" value="ECO:0000250"/>
    <property type="project" value="UniProtKB"/>
</dbReference>
<dbReference type="GO" id="GO:0007026">
    <property type="term" value="P:negative regulation of microtubule depolymerization"/>
    <property type="evidence" value="ECO:0000318"/>
    <property type="project" value="GO_Central"/>
</dbReference>
<dbReference type="GO" id="GO:0031175">
    <property type="term" value="P:neuron projection development"/>
    <property type="evidence" value="ECO:0000315"/>
    <property type="project" value="UniProtKB"/>
</dbReference>
<dbReference type="GO" id="GO:0022604">
    <property type="term" value="P:regulation of cell morphogenesis"/>
    <property type="evidence" value="ECO:0000266"/>
    <property type="project" value="RGD"/>
</dbReference>
<dbReference type="GO" id="GO:0031113">
    <property type="term" value="P:regulation of microtubule polymerization"/>
    <property type="evidence" value="ECO:0000250"/>
    <property type="project" value="UniProtKB"/>
</dbReference>
<dbReference type="FunFam" id="3.10.20.360:FF:000001">
    <property type="entry name" value="Calmodulin-regulated spectrin-associated protein 3 isoform 2"/>
    <property type="match status" value="1"/>
</dbReference>
<dbReference type="Gene3D" id="3.10.20.360">
    <property type="entry name" value="CKK domain"/>
    <property type="match status" value="1"/>
</dbReference>
<dbReference type="InterPro" id="IPR032940">
    <property type="entry name" value="CAMSAP"/>
</dbReference>
<dbReference type="InterPro" id="IPR022613">
    <property type="entry name" value="CAMSAP-like_CH_dom"/>
</dbReference>
<dbReference type="InterPro" id="IPR031372">
    <property type="entry name" value="CAMSAP_CC1"/>
</dbReference>
<dbReference type="InterPro" id="IPR001715">
    <property type="entry name" value="CH_dom"/>
</dbReference>
<dbReference type="InterPro" id="IPR036872">
    <property type="entry name" value="CH_dom_sf"/>
</dbReference>
<dbReference type="InterPro" id="IPR038209">
    <property type="entry name" value="CKK_dom_sf"/>
</dbReference>
<dbReference type="InterPro" id="IPR014797">
    <property type="entry name" value="CKK_domain"/>
</dbReference>
<dbReference type="InterPro" id="IPR011033">
    <property type="entry name" value="PRC_barrel-like_sf"/>
</dbReference>
<dbReference type="PANTHER" id="PTHR21595:SF3">
    <property type="entry name" value="CALMODULIN-REGULATED SPECTRIN-ASSOCIATED PROTEIN 1"/>
    <property type="match status" value="1"/>
</dbReference>
<dbReference type="PANTHER" id="PTHR21595">
    <property type="entry name" value="PATRONIN"/>
    <property type="match status" value="1"/>
</dbReference>
<dbReference type="Pfam" id="PF17095">
    <property type="entry name" value="CAMSAP_CC1"/>
    <property type="match status" value="1"/>
</dbReference>
<dbReference type="Pfam" id="PF11971">
    <property type="entry name" value="CAMSAP_CH"/>
    <property type="match status" value="1"/>
</dbReference>
<dbReference type="Pfam" id="PF08683">
    <property type="entry name" value="CAMSAP_CKK"/>
    <property type="match status" value="1"/>
</dbReference>
<dbReference type="SMART" id="SM01051">
    <property type="entry name" value="CAMSAP_CKK"/>
    <property type="match status" value="1"/>
</dbReference>
<dbReference type="SUPFAM" id="SSF47576">
    <property type="entry name" value="Calponin-homology domain, CH-domain"/>
    <property type="match status" value="1"/>
</dbReference>
<dbReference type="SUPFAM" id="SSF50346">
    <property type="entry name" value="PRC-barrel domain"/>
    <property type="match status" value="1"/>
</dbReference>
<dbReference type="PROSITE" id="PS50021">
    <property type="entry name" value="CH"/>
    <property type="match status" value="1"/>
</dbReference>
<dbReference type="PROSITE" id="PS51508">
    <property type="entry name" value="CKK"/>
    <property type="match status" value="1"/>
</dbReference>
<sequence length="1604" mass="178525">MVDAGGRSAAEGWRRMEAPPEGADLVPLDRYDAARAKIAANLQWICAKAYGLDNIPEDLRDPFYIDQYEQEHIKPPVIKLLLSSELYCRVCSLILKGDQAATLQGHQSVIQALSRKGIYVMESDDTPVTDADLSQAPIKMSGHMAMVDALMMAYTVEMISIEKVVASVKRFSTFSASKELPYDLEDAMVFWINKVNLKMREITEKEVKLKQQPLESPAHQKPGLEHAVMHCMLEPVDFARVVRYRREHLSARQSPYFPLLEDLMRDGSDGAALLAVVHYYCPEQMKLDDICLKEVPSMADSLYNIRLLREFSNEHLNKCFYLTLEDMLYAPLVLKPNVMVFIAELFWWFENVKPDFVQPRDIQELKDAKTVLQQKSSRPPVPISNATKRSFLGSPAAMSPADLPPSTQPLTEGSHRYHLHSEEPECLGKGASTFSPSHPLLPLRQKQQKVSQAEEIPDQRHRSNSLTRADGQPRGAAIAWPDKKNRPVSQPTSFALHHAASCDVDPSSGDSISLARSISKDSLASNIIHLTPQNQPHPSAGKTNGKSLLSNVNIEDDEEEELVAIIRTDVSPHSPEIPRTSPQAPGLVASIRSPQRQADTLESKPDSFYLEPLMPAVLRPAKEKQIITKEDERGEGRPRTIMAKRPSEGSQPLVRKKVTGSHGSRDLNRTFTPIPCSEFAASIDPTEVGPQSTEATGEGQPLALGRFDPVPQGQVADGFFLHVGRAEEDEGRWYVGSQSPSSHDSEPWTILRQDSDSDVVDVEDAEQDFIGEDHPVVIPRYAGEEESAKLQEDMKVKEHEDKDDASGRSSPCLSTTSQLSSMSMASGSVKMTSFAERKLQRLNSCETKSSTSSSQKTTPDASESCPAPLTTWRQKREQSPSRHSKDPASLLASELVQLHMQLEEKRRAIEAQKKKMEALSARQRLKLGKAAFLHVVKKGKADGAPQPLRPEHFTKEFTQHNGEDLDDGTCKTEGFLVKEEQRDLSDSQDVAFVQLHKPRDPATLHDGEKHRVISAALLEDSVGEVDVNECDLSIEKLNETISTLQQAILKISQQQEQLLMKSPTVPTSGTKNNCQDQKVKAPVHFVEPLSPTGVPGHRKPPRLGQGRNSRSGRPAELKVPKDRQQGCSRSKTPTPSVETLPHSRSLPPSTHPRSPLDPGGELPEKCLFDSYRLHDESNHRTFGLSSCKDANIVSEQMNFKEGLDTSVQEAELSSSAITGKEHTPMEEPLRSKASLIEVDLSDLKAPDEDGEVVGHESSLELGGESDQKPGVGFFFKDEQKAEDELAKKRAAFLLKQQRKAEEARARKQQLEAEVELKRDEARRKAEEDRLRKEEEKARRELIKQEYLRRKQQQALEEQGLGKPKSKPKKPRPKSVHREESCSDSGTKCSSTPDNLSQTHSGSSLSLASAATTEPESVHSGGTPSHRVESLEALPILSRNPSRSTDRDWETASAASSLASVAEYTGPKLFKEPSSKSNKPIIHNAISHCCLAGKVNEPHKNSILEELEKCDANHYIILFRDAGCQFRALYCYQPDTEEIYKLTGTGPKSITKKMIDKLYKYSSDRKQFNLIPAKTMSVSVDALTIHNHLWQPKRPTVPKKTQTRK</sequence>
<proteinExistence type="evidence at protein level"/>
<reference key="1">
    <citation type="journal article" date="2004" name="Nature">
        <title>Genome sequence of the Brown Norway rat yields insights into mammalian evolution.</title>
        <authorList>
            <person name="Gibbs R.A."/>
            <person name="Weinstock G.M."/>
            <person name="Metzker M.L."/>
            <person name="Muzny D.M."/>
            <person name="Sodergren E.J."/>
            <person name="Scherer S."/>
            <person name="Scott G."/>
            <person name="Steffen D."/>
            <person name="Worley K.C."/>
            <person name="Burch P.E."/>
            <person name="Okwuonu G."/>
            <person name="Hines S."/>
            <person name="Lewis L."/>
            <person name="Deramo C."/>
            <person name="Delgado O."/>
            <person name="Dugan-Rocha S."/>
            <person name="Miner G."/>
            <person name="Morgan M."/>
            <person name="Hawes A."/>
            <person name="Gill R."/>
            <person name="Holt R.A."/>
            <person name="Adams M.D."/>
            <person name="Amanatides P.G."/>
            <person name="Baden-Tillson H."/>
            <person name="Barnstead M."/>
            <person name="Chin S."/>
            <person name="Evans C.A."/>
            <person name="Ferriera S."/>
            <person name="Fosler C."/>
            <person name="Glodek A."/>
            <person name="Gu Z."/>
            <person name="Jennings D."/>
            <person name="Kraft C.L."/>
            <person name="Nguyen T."/>
            <person name="Pfannkoch C.M."/>
            <person name="Sitter C."/>
            <person name="Sutton G.G."/>
            <person name="Venter J.C."/>
            <person name="Woodage T."/>
            <person name="Smith D."/>
            <person name="Lee H.-M."/>
            <person name="Gustafson E."/>
            <person name="Cahill P."/>
            <person name="Kana A."/>
            <person name="Doucette-Stamm L."/>
            <person name="Weinstock K."/>
            <person name="Fechtel K."/>
            <person name="Weiss R.B."/>
            <person name="Dunn D.M."/>
            <person name="Green E.D."/>
            <person name="Blakesley R.W."/>
            <person name="Bouffard G.G."/>
            <person name="De Jong P.J."/>
            <person name="Osoegawa K."/>
            <person name="Zhu B."/>
            <person name="Marra M."/>
            <person name="Schein J."/>
            <person name="Bosdet I."/>
            <person name="Fjell C."/>
            <person name="Jones S."/>
            <person name="Krzywinski M."/>
            <person name="Mathewson C."/>
            <person name="Siddiqui A."/>
            <person name="Wye N."/>
            <person name="McPherson J."/>
            <person name="Zhao S."/>
            <person name="Fraser C.M."/>
            <person name="Shetty J."/>
            <person name="Shatsman S."/>
            <person name="Geer K."/>
            <person name="Chen Y."/>
            <person name="Abramzon S."/>
            <person name="Nierman W.C."/>
            <person name="Havlak P.H."/>
            <person name="Chen R."/>
            <person name="Durbin K.J."/>
            <person name="Egan A."/>
            <person name="Ren Y."/>
            <person name="Song X.-Z."/>
            <person name="Li B."/>
            <person name="Liu Y."/>
            <person name="Qin X."/>
            <person name="Cawley S."/>
            <person name="Cooney A.J."/>
            <person name="D'Souza L.M."/>
            <person name="Martin K."/>
            <person name="Wu J.Q."/>
            <person name="Gonzalez-Garay M.L."/>
            <person name="Jackson A.R."/>
            <person name="Kalafus K.J."/>
            <person name="McLeod M.P."/>
            <person name="Milosavljevic A."/>
            <person name="Virk D."/>
            <person name="Volkov A."/>
            <person name="Wheeler D.A."/>
            <person name="Zhang Z."/>
            <person name="Bailey J.A."/>
            <person name="Eichler E.E."/>
            <person name="Tuzun E."/>
            <person name="Birney E."/>
            <person name="Mongin E."/>
            <person name="Ureta-Vidal A."/>
            <person name="Woodwark C."/>
            <person name="Zdobnov E."/>
            <person name="Bork P."/>
            <person name="Suyama M."/>
            <person name="Torrents D."/>
            <person name="Alexandersson M."/>
            <person name="Trask B.J."/>
            <person name="Young J.M."/>
            <person name="Huang H."/>
            <person name="Wang H."/>
            <person name="Xing H."/>
            <person name="Daniels S."/>
            <person name="Gietzen D."/>
            <person name="Schmidt J."/>
            <person name="Stevens K."/>
            <person name="Vitt U."/>
            <person name="Wingrove J."/>
            <person name="Camara F."/>
            <person name="Mar Alba M."/>
            <person name="Abril J.F."/>
            <person name="Guigo R."/>
            <person name="Smit A."/>
            <person name="Dubchak I."/>
            <person name="Rubin E.M."/>
            <person name="Couronne O."/>
            <person name="Poliakov A."/>
            <person name="Huebner N."/>
            <person name="Ganten D."/>
            <person name="Goesele C."/>
            <person name="Hummel O."/>
            <person name="Kreitler T."/>
            <person name="Lee Y.-A."/>
            <person name="Monti J."/>
            <person name="Schulz H."/>
            <person name="Zimdahl H."/>
            <person name="Himmelbauer H."/>
            <person name="Lehrach H."/>
            <person name="Jacob H.J."/>
            <person name="Bromberg S."/>
            <person name="Gullings-Handley J."/>
            <person name="Jensen-Seaman M.I."/>
            <person name="Kwitek A.E."/>
            <person name="Lazar J."/>
            <person name="Pasko D."/>
            <person name="Tonellato P.J."/>
            <person name="Twigger S."/>
            <person name="Ponting C.P."/>
            <person name="Duarte J.M."/>
            <person name="Rice S."/>
            <person name="Goodstadt L."/>
            <person name="Beatson S.A."/>
            <person name="Emes R.D."/>
            <person name="Winter E.E."/>
            <person name="Webber C."/>
            <person name="Brandt P."/>
            <person name="Nyakatura G."/>
            <person name="Adetobi M."/>
            <person name="Chiaromonte F."/>
            <person name="Elnitski L."/>
            <person name="Eswara P."/>
            <person name="Hardison R.C."/>
            <person name="Hou M."/>
            <person name="Kolbe D."/>
            <person name="Makova K."/>
            <person name="Miller W."/>
            <person name="Nekrutenko A."/>
            <person name="Riemer C."/>
            <person name="Schwartz S."/>
            <person name="Taylor J."/>
            <person name="Yang S."/>
            <person name="Zhang Y."/>
            <person name="Lindpaintner K."/>
            <person name="Andrews T.D."/>
            <person name="Caccamo M."/>
            <person name="Clamp M."/>
            <person name="Clarke L."/>
            <person name="Curwen V."/>
            <person name="Durbin R.M."/>
            <person name="Eyras E."/>
            <person name="Searle S.M."/>
            <person name="Cooper G.M."/>
            <person name="Batzoglou S."/>
            <person name="Brudno M."/>
            <person name="Sidow A."/>
            <person name="Stone E.A."/>
            <person name="Payseur B.A."/>
            <person name="Bourque G."/>
            <person name="Lopez-Otin C."/>
            <person name="Puente X.S."/>
            <person name="Chakrabarti K."/>
            <person name="Chatterji S."/>
            <person name="Dewey C."/>
            <person name="Pachter L."/>
            <person name="Bray N."/>
            <person name="Yap V.B."/>
            <person name="Caspi A."/>
            <person name="Tesler G."/>
            <person name="Pevzner P.A."/>
            <person name="Haussler D."/>
            <person name="Roskin K.M."/>
            <person name="Baertsch R."/>
            <person name="Clawson H."/>
            <person name="Furey T.S."/>
            <person name="Hinrichs A.S."/>
            <person name="Karolchik D."/>
            <person name="Kent W.J."/>
            <person name="Rosenbloom K.R."/>
            <person name="Trumbower H."/>
            <person name="Weirauch M."/>
            <person name="Cooper D.N."/>
            <person name="Stenson P.D."/>
            <person name="Ma B."/>
            <person name="Brent M."/>
            <person name="Arumugam M."/>
            <person name="Shteynberg D."/>
            <person name="Copley R.R."/>
            <person name="Taylor M.S."/>
            <person name="Riethman H."/>
            <person name="Mudunuri U."/>
            <person name="Peterson J."/>
            <person name="Guyer M."/>
            <person name="Felsenfeld A."/>
            <person name="Old S."/>
            <person name="Mockrin S."/>
            <person name="Collins F.S."/>
        </authorList>
    </citation>
    <scope>NUCLEOTIDE SEQUENCE [LARGE SCALE GENOMIC DNA]</scope>
    <source>
        <strain>Brown Norway</strain>
    </source>
</reference>
<reference key="2">
    <citation type="journal article" date="2009" name="J. Neurosci. Res.">
        <title>A new monoclonal antibody, A3B10, specific for astrocyte-lineage cells recognizes calmodulin-regulated spectrin-associated protein 1 (Camsap1).</title>
        <authorList>
            <person name="Yamamoto M."/>
            <person name="Yoshimura K."/>
            <person name="Kitada M."/>
            <person name="Nakahara J."/>
            <person name="Seiwa C."/>
            <person name="Ueki T."/>
            <person name="Shimoda Y."/>
            <person name="Ishige A."/>
            <person name="Watanabe K."/>
            <person name="Asou H."/>
        </authorList>
    </citation>
    <scope>TISSUE SPECIFICITY</scope>
    <scope>DEVELOPMENTAL STAGE</scope>
</reference>
<reference key="3">
    <citation type="journal article" date="2009" name="Mol. Biol. Evol.">
        <title>The CKK domain (DUF1781) binds microtubules and defines the CAMSAP/ssp4 family of animal proteins.</title>
        <authorList>
            <person name="Baines A.J."/>
            <person name="Bignone P.A."/>
            <person name="King M.D.A."/>
            <person name="Maggs A.M."/>
            <person name="Bennett P.M."/>
            <person name="Pinder J.C."/>
            <person name="Phillips G.W."/>
        </authorList>
    </citation>
    <scope>FUNCTION</scope>
</reference>
<reference key="4">
    <citation type="journal article" date="2012" name="Nat. Commun.">
        <title>Quantitative maps of protein phosphorylation sites across 14 different rat organs and tissues.</title>
        <authorList>
            <person name="Lundby A."/>
            <person name="Secher A."/>
            <person name="Lage K."/>
            <person name="Nordsborg N.B."/>
            <person name="Dmytriyev A."/>
            <person name="Lundby C."/>
            <person name="Olsen J.V."/>
        </authorList>
    </citation>
    <scope>PHOSPHORYLATION [LARGE SCALE ANALYSIS] AT SER-574; SER-755; SER-757; SER-1090; SER-1154 AND SER-1429</scope>
    <scope>IDENTIFICATION BY MASS SPECTROMETRY [LARGE SCALE ANALYSIS]</scope>
</reference>
<reference key="5">
    <citation type="journal article" date="2014" name="J. Neurochem.">
        <title>A conserved sequence in CAMSAP1 (calmodulin regulated spectrin-associated protein 1) links its interaction with spectrin and calmodulin to neurite outgrowth.</title>
        <authorList>
            <person name="King M.D."/>
            <person name="Phillips G.W."/>
            <person name="Bignone P.A."/>
            <person name="Hayes N.V."/>
            <person name="Pinder J.C."/>
            <person name="Baines A.J."/>
        </authorList>
    </citation>
    <scope>FUNCTION</scope>
    <scope>INTERACTION WITH CALMODULIN AND SPTBN1</scope>
</reference>
<name>CAMP1_RAT</name>
<comment type="function">
    <text evidence="3 9 10">Key microtubule-organizing protein that specifically binds the minus-end of non-centrosomal microtubules and regulates their dynamics and organization (PubMed:19508979, PubMed:24117850). Specifically recognizes growing microtubule minus-ends and stabilizes microtubules (By similarity). Acts on free microtubule minus-ends that are not capped by microtubule-nucleating proteins or other factors and protects microtubule minus-ends from depolymerization (By similarity). In contrast to CAMSAP2 and CAMSAP3, tracks along the growing tips of minus-end microtubules without significantly affecting the polymerization rate: binds at the very tip of the microtubules minus-end and acts as a minus-end tracking protein (-TIP) that dissociates from microtubules after allowing tubulin incorporation (By similarity). Through interaction with spectrin may regulate neurite outgrowth (PubMed:24117850).</text>
</comment>
<comment type="subunit">
    <text evidence="10">Interacts with spectrin via SPTBN1; the interaction is direct. Interacts with calmodulin; calcium-dependent it prevents interaction with spectrin.</text>
</comment>
<comment type="subcellular location">
    <subcellularLocation>
        <location evidence="3">Cytoplasm</location>
        <location evidence="3">Cytoskeleton</location>
    </subcellularLocation>
    <text evidence="3">Associates with the minus-end of microtubules. In contrast to CAMSAP2 and CAMSAP3, does not form stretches of decorated microtubule minus-ends.</text>
</comment>
<comment type="tissue specificity">
    <text evidence="8">In brain, specifically expressed in astrocytes (at protein level).</text>
</comment>
<comment type="developmental stage">
    <text evidence="8">First detected at 18 dpc, expression increases with growth and development in spite of a temporal decrease at P14. Still expressed in adult animals, in both the cerebrum and the cerebellum, although at lower levels in adults than in younger animals (at protein level).</text>
</comment>
<comment type="domain">
    <text evidence="6">The CKK domain binds microtubules.</text>
</comment>
<comment type="similarity">
    <text evidence="6">Belongs to the CAMSAP1 family.</text>
</comment>
<gene>
    <name type="primary">Camsap1</name>
</gene>
<keyword id="KW-0175">Coiled coil</keyword>
<keyword id="KW-0963">Cytoplasm</keyword>
<keyword id="KW-0206">Cytoskeleton</keyword>
<keyword id="KW-0493">Microtubule</keyword>
<keyword id="KW-0597">Phosphoprotein</keyword>
<keyword id="KW-1185">Reference proteome</keyword>
<feature type="chain" id="PRO_0000424848" description="Calmodulin-regulated spectrin-associated protein 1">
    <location>
        <begin position="1"/>
        <end position="1604"/>
    </location>
</feature>
<feature type="domain" description="Calponin-homology (CH)" evidence="5">
    <location>
        <begin position="235"/>
        <end position="350"/>
    </location>
</feature>
<feature type="domain" description="CKK" evidence="6">
    <location>
        <begin position="1465"/>
        <end position="1599"/>
    </location>
</feature>
<feature type="region of interest" description="Disordered" evidence="7">
    <location>
        <begin position="394"/>
        <end position="413"/>
    </location>
</feature>
<feature type="region of interest" description="Disordered" evidence="7">
    <location>
        <begin position="444"/>
        <end position="491"/>
    </location>
</feature>
<feature type="region of interest" description="Disordered" evidence="7">
    <location>
        <begin position="642"/>
        <end position="671"/>
    </location>
</feature>
<feature type="region of interest" description="Disordered" evidence="7">
    <location>
        <begin position="784"/>
        <end position="824"/>
    </location>
</feature>
<feature type="region of interest" description="Disordered" evidence="7">
    <location>
        <begin position="842"/>
        <end position="888"/>
    </location>
</feature>
<feature type="region of interest" description="Sufficient for interaction with SPTBN1" evidence="1">
    <location>
        <begin position="888"/>
        <end position="909"/>
    </location>
</feature>
<feature type="region of interest" description="Sufficient for interaction with calmodulin">
    <location>
        <begin position="920"/>
        <end position="939"/>
    </location>
</feature>
<feature type="region of interest" description="Disordered" evidence="7">
    <location>
        <begin position="1085"/>
        <end position="1163"/>
    </location>
</feature>
<feature type="region of interest" description="Disordered" evidence="7">
    <location>
        <begin position="1246"/>
        <end position="1271"/>
    </location>
</feature>
<feature type="region of interest" description="Disordered" evidence="7">
    <location>
        <begin position="1298"/>
        <end position="1448"/>
    </location>
</feature>
<feature type="coiled-coil region" evidence="4">
    <location>
        <begin position="890"/>
        <end position="926"/>
    </location>
</feature>
<feature type="coiled-coil region" evidence="4">
    <location>
        <begin position="1026"/>
        <end position="1058"/>
    </location>
</feature>
<feature type="coiled-coil region" evidence="4">
    <location>
        <begin position="1286"/>
        <end position="1357"/>
    </location>
</feature>
<feature type="compositionally biased region" description="Basic and acidic residues" evidence="7">
    <location>
        <begin position="784"/>
        <end position="806"/>
    </location>
</feature>
<feature type="compositionally biased region" description="Low complexity" evidence="7">
    <location>
        <begin position="813"/>
        <end position="824"/>
    </location>
</feature>
<feature type="compositionally biased region" description="Low complexity" evidence="7">
    <location>
        <begin position="847"/>
        <end position="858"/>
    </location>
</feature>
<feature type="compositionally biased region" description="Basic and acidic residues" evidence="7">
    <location>
        <begin position="874"/>
        <end position="886"/>
    </location>
</feature>
<feature type="compositionally biased region" description="Basic and acidic residues" evidence="7">
    <location>
        <begin position="1113"/>
        <end position="1124"/>
    </location>
</feature>
<feature type="compositionally biased region" description="Polar residues" evidence="7">
    <location>
        <begin position="1125"/>
        <end position="1137"/>
    </location>
</feature>
<feature type="compositionally biased region" description="Basic and acidic residues" evidence="7">
    <location>
        <begin position="1246"/>
        <end position="1258"/>
    </location>
</feature>
<feature type="compositionally biased region" description="Basic and acidic residues" evidence="7">
    <location>
        <begin position="1298"/>
        <end position="1348"/>
    </location>
</feature>
<feature type="compositionally biased region" description="Basic residues" evidence="7">
    <location>
        <begin position="1363"/>
        <end position="1374"/>
    </location>
</feature>
<feature type="compositionally biased region" description="Polar residues" evidence="7">
    <location>
        <begin position="1382"/>
        <end position="1394"/>
    </location>
</feature>
<feature type="compositionally biased region" description="Low complexity" evidence="7">
    <location>
        <begin position="1395"/>
        <end position="1412"/>
    </location>
</feature>
<feature type="modified residue" description="Phosphoserine" evidence="3">
    <location>
        <position position="216"/>
    </location>
</feature>
<feature type="modified residue" description="Phosphoserine" evidence="3">
    <location>
        <position position="390"/>
    </location>
</feature>
<feature type="modified residue" description="Phosphoserine" evidence="3">
    <location>
        <position position="394"/>
    </location>
</feature>
<feature type="modified residue" description="Phosphoserine" evidence="3">
    <location>
        <position position="435"/>
    </location>
</feature>
<feature type="modified residue" description="Phosphothreonine" evidence="3">
    <location>
        <position position="531"/>
    </location>
</feature>
<feature type="modified residue" description="Phosphoserine" evidence="2">
    <location>
        <position position="571"/>
    </location>
</feature>
<feature type="modified residue" description="Phosphoserine" evidence="11">
    <location>
        <position position="574"/>
    </location>
</feature>
<feature type="modified residue" description="Phosphoserine" evidence="3">
    <location>
        <position position="581"/>
    </location>
</feature>
<feature type="modified residue" description="Phosphoserine" evidence="3">
    <location>
        <position position="593"/>
    </location>
</feature>
<feature type="modified residue" description="Phosphoserine" evidence="3">
    <location>
        <position position="607"/>
    </location>
</feature>
<feature type="modified residue" description="Phosphoserine" evidence="3">
    <location>
        <position position="647"/>
    </location>
</feature>
<feature type="modified residue" description="Phosphoserine" evidence="3">
    <location>
        <position position="739"/>
    </location>
</feature>
<feature type="modified residue" description="Phosphoserine" evidence="2">
    <location>
        <position position="745"/>
    </location>
</feature>
<feature type="modified residue" description="Phosphoserine" evidence="11">
    <location>
        <position position="755"/>
    </location>
</feature>
<feature type="modified residue" description="Phosphoserine" evidence="11">
    <location>
        <position position="757"/>
    </location>
</feature>
<feature type="modified residue" description="Phosphoserine" evidence="11">
    <location>
        <position position="1090"/>
    </location>
</feature>
<feature type="modified residue" description="Phosphoserine" evidence="11">
    <location>
        <position position="1154"/>
    </location>
</feature>
<feature type="modified residue" description="Phosphoserine" evidence="3">
    <location>
        <position position="1400"/>
    </location>
</feature>
<feature type="modified residue" description="Phosphoserine" evidence="11">
    <location>
        <position position="1429"/>
    </location>
</feature>
<feature type="modified residue" description="Phosphotyrosine" evidence="3">
    <location>
        <position position="1539"/>
    </location>
</feature>
<evidence type="ECO:0000250" key="1"/>
<evidence type="ECO:0000250" key="2">
    <source>
        <dbReference type="UniProtKB" id="A2AHC3"/>
    </source>
</evidence>
<evidence type="ECO:0000250" key="3">
    <source>
        <dbReference type="UniProtKB" id="Q5T5Y3"/>
    </source>
</evidence>
<evidence type="ECO:0000255" key="4"/>
<evidence type="ECO:0000255" key="5">
    <source>
        <dbReference type="PROSITE-ProRule" id="PRU00044"/>
    </source>
</evidence>
<evidence type="ECO:0000255" key="6">
    <source>
        <dbReference type="PROSITE-ProRule" id="PRU00841"/>
    </source>
</evidence>
<evidence type="ECO:0000256" key="7">
    <source>
        <dbReference type="SAM" id="MobiDB-lite"/>
    </source>
</evidence>
<evidence type="ECO:0000269" key="8">
    <source>
    </source>
</evidence>
<evidence type="ECO:0000269" key="9">
    <source>
    </source>
</evidence>
<evidence type="ECO:0000269" key="10">
    <source>
    </source>
</evidence>
<evidence type="ECO:0007744" key="11">
    <source>
    </source>
</evidence>